<keyword id="KW-0007">Acetylation</keyword>
<keyword id="KW-0025">Alternative splicing</keyword>
<keyword id="KW-0966">Cell projection</keyword>
<keyword id="KW-0175">Coiled coil</keyword>
<keyword id="KW-0963">Cytoplasm</keyword>
<keyword id="KW-0206">Cytoskeleton</keyword>
<keyword id="KW-0217">Developmental protein</keyword>
<keyword id="KW-0597">Phosphoprotein</keyword>
<keyword id="KW-1185">Reference proteome</keyword>
<dbReference type="EMBL" id="EF055486">
    <property type="protein sequence ID" value="ABK56021.1"/>
    <property type="molecule type" value="mRNA"/>
</dbReference>
<dbReference type="EMBL" id="AK082304">
    <property type="protein sequence ID" value="BAC38460.1"/>
    <property type="molecule type" value="mRNA"/>
</dbReference>
<dbReference type="EMBL" id="AK220405">
    <property type="protein sequence ID" value="BAD90258.1"/>
    <property type="status" value="ALT_INIT"/>
    <property type="molecule type" value="mRNA"/>
</dbReference>
<dbReference type="EMBL" id="BC030338">
    <property type="protein sequence ID" value="AAH30338.1"/>
    <property type="molecule type" value="mRNA"/>
</dbReference>
<dbReference type="CCDS" id="CCDS50480.1">
    <molecule id="Q8K2Q9-2"/>
</dbReference>
<dbReference type="CCDS" id="CCDS50481.1">
    <molecule id="Q8K2Q9-1"/>
</dbReference>
<dbReference type="RefSeq" id="NP_001107784.1">
    <molecule id="Q8K2Q9-1"/>
    <property type="nucleotide sequence ID" value="NM_001114312.1"/>
</dbReference>
<dbReference type="RefSeq" id="NP_780381.1">
    <molecule id="Q8K2Q9-2"/>
    <property type="nucleotide sequence ID" value="NM_175172.4"/>
</dbReference>
<dbReference type="SMR" id="Q8K2Q9"/>
<dbReference type="BioGRID" id="214834">
    <property type="interactions" value="7"/>
</dbReference>
<dbReference type="FunCoup" id="Q8K2Q9">
    <property type="interactions" value="159"/>
</dbReference>
<dbReference type="IntAct" id="Q8K2Q9">
    <property type="interactions" value="2"/>
</dbReference>
<dbReference type="STRING" id="10090.ENSMUSP00000041378"/>
<dbReference type="iPTMnet" id="Q8K2Q9"/>
<dbReference type="PhosphoSitePlus" id="Q8K2Q9"/>
<dbReference type="SwissPalm" id="Q8K2Q9"/>
<dbReference type="jPOST" id="Q8K2Q9"/>
<dbReference type="PaxDb" id="10090-ENSMUSP00000041378"/>
<dbReference type="PeptideAtlas" id="Q8K2Q9"/>
<dbReference type="ProteomicsDB" id="255415">
    <molecule id="Q8K2Q9-1"/>
</dbReference>
<dbReference type="ProteomicsDB" id="255416">
    <molecule id="Q8K2Q9-2"/>
</dbReference>
<dbReference type="Antibodypedia" id="46270">
    <property type="antibodies" value="41 antibodies from 14 providers"/>
</dbReference>
<dbReference type="DNASU" id="71653"/>
<dbReference type="Ensembl" id="ENSMUST00000047511.15">
    <molecule id="Q8K2Q9-1"/>
    <property type="protein sequence ID" value="ENSMUSP00000041378.8"/>
    <property type="gene ID" value="ENSMUSG00000041362.18"/>
</dbReference>
<dbReference type="Ensembl" id="ENSMUST00000163821.3">
    <molecule id="Q8K2Q9-2"/>
    <property type="protein sequence ID" value="ENSMUSP00000126227.2"/>
    <property type="gene ID" value="ENSMUSG00000041362.18"/>
</dbReference>
<dbReference type="GeneID" id="71653"/>
<dbReference type="KEGG" id="mmu:71653"/>
<dbReference type="UCSC" id="uc008ibc.1">
    <molecule id="Q8K2Q9-2"/>
    <property type="organism name" value="mouse"/>
</dbReference>
<dbReference type="UCSC" id="uc008ibe.1">
    <molecule id="Q8K2Q9-1"/>
    <property type="organism name" value="mouse"/>
</dbReference>
<dbReference type="AGR" id="MGI:1918903"/>
<dbReference type="CTD" id="57698"/>
<dbReference type="MGI" id="MGI:1918903">
    <property type="gene designation" value="Shtn1"/>
</dbReference>
<dbReference type="VEuPathDB" id="HostDB:ENSMUSG00000041362"/>
<dbReference type="eggNOG" id="ENOG502QVVT">
    <property type="taxonomic scope" value="Eukaryota"/>
</dbReference>
<dbReference type="GeneTree" id="ENSGT00510000048167"/>
<dbReference type="HOGENOM" id="CLU_027649_1_1_1"/>
<dbReference type="InParanoid" id="Q8K2Q9"/>
<dbReference type="OMA" id="MQQASQW"/>
<dbReference type="OrthoDB" id="6111338at2759"/>
<dbReference type="PhylomeDB" id="Q8K2Q9"/>
<dbReference type="TreeFam" id="TF326250"/>
<dbReference type="BioGRID-ORCS" id="71653">
    <property type="hits" value="1 hit in 75 CRISPR screens"/>
</dbReference>
<dbReference type="ChiTaRS" id="Shtn1">
    <property type="organism name" value="mouse"/>
</dbReference>
<dbReference type="PRO" id="PR:Q8K2Q9"/>
<dbReference type="Proteomes" id="UP000000589">
    <property type="component" value="Chromosome 19"/>
</dbReference>
<dbReference type="RNAct" id="Q8K2Q9">
    <property type="molecule type" value="protein"/>
</dbReference>
<dbReference type="Bgee" id="ENSMUSG00000041362">
    <property type="expression patterns" value="Expressed in otolith organ and 205 other cell types or tissues"/>
</dbReference>
<dbReference type="GO" id="GO:0030424">
    <property type="term" value="C:axon"/>
    <property type="evidence" value="ECO:0000314"/>
    <property type="project" value="UniProtKB"/>
</dbReference>
<dbReference type="GO" id="GO:0044295">
    <property type="term" value="C:axonal growth cone"/>
    <property type="evidence" value="ECO:0000314"/>
    <property type="project" value="MGI"/>
</dbReference>
<dbReference type="GO" id="GO:0031252">
    <property type="term" value="C:cell leading edge"/>
    <property type="evidence" value="ECO:0000314"/>
    <property type="project" value="UniProtKB"/>
</dbReference>
<dbReference type="GO" id="GO:0030175">
    <property type="term" value="C:filopodium"/>
    <property type="evidence" value="ECO:0000250"/>
    <property type="project" value="UniProtKB"/>
</dbReference>
<dbReference type="GO" id="GO:0030426">
    <property type="term" value="C:growth cone"/>
    <property type="evidence" value="ECO:0000314"/>
    <property type="project" value="UniProtKB"/>
</dbReference>
<dbReference type="GO" id="GO:0030027">
    <property type="term" value="C:lamellipodium"/>
    <property type="evidence" value="ECO:0000250"/>
    <property type="project" value="UniProtKB"/>
</dbReference>
<dbReference type="GO" id="GO:0005874">
    <property type="term" value="C:microtubule"/>
    <property type="evidence" value="ECO:0000266"/>
    <property type="project" value="MGI"/>
</dbReference>
<dbReference type="GO" id="GO:0005875">
    <property type="term" value="C:microtubule associated complex"/>
    <property type="evidence" value="ECO:0000314"/>
    <property type="project" value="UniProtKB"/>
</dbReference>
<dbReference type="GO" id="GO:0015630">
    <property type="term" value="C:microtubule cytoskeleton"/>
    <property type="evidence" value="ECO:0000314"/>
    <property type="project" value="UniProtKB"/>
</dbReference>
<dbReference type="GO" id="GO:0043204">
    <property type="term" value="C:perikaryon"/>
    <property type="evidence" value="ECO:0000314"/>
    <property type="project" value="UniProtKB"/>
</dbReference>
<dbReference type="GO" id="GO:0048471">
    <property type="term" value="C:perinuclear region of cytoplasm"/>
    <property type="evidence" value="ECO:0000314"/>
    <property type="project" value="UniProtKB"/>
</dbReference>
<dbReference type="GO" id="GO:0051015">
    <property type="term" value="F:actin filament binding"/>
    <property type="evidence" value="ECO:0000250"/>
    <property type="project" value="UniProtKB"/>
</dbReference>
<dbReference type="GO" id="GO:0019894">
    <property type="term" value="F:kinesin binding"/>
    <property type="evidence" value="ECO:0000353"/>
    <property type="project" value="UniProtKB"/>
</dbReference>
<dbReference type="GO" id="GO:0061573">
    <property type="term" value="P:actin filament bundle retrograde transport"/>
    <property type="evidence" value="ECO:0000250"/>
    <property type="project" value="UniProtKB"/>
</dbReference>
<dbReference type="GO" id="GO:0007409">
    <property type="term" value="P:axonogenesis"/>
    <property type="evidence" value="ECO:0000250"/>
    <property type="project" value="UniProtKB"/>
</dbReference>
<dbReference type="GO" id="GO:0032488">
    <property type="term" value="P:Cdc42 protein signal transduction"/>
    <property type="evidence" value="ECO:0000250"/>
    <property type="project" value="UniProtKB"/>
</dbReference>
<dbReference type="GO" id="GO:0060327">
    <property type="term" value="P:cytoplasmic actin-based contraction involved in cell motility"/>
    <property type="evidence" value="ECO:0000250"/>
    <property type="project" value="UniProtKB"/>
</dbReference>
<dbReference type="GO" id="GO:0061163">
    <property type="term" value="P:endoplasmic reticulum polarization"/>
    <property type="evidence" value="ECO:0000315"/>
    <property type="project" value="UniProtKB"/>
</dbReference>
<dbReference type="GO" id="GO:0051899">
    <property type="term" value="P:membrane depolarization"/>
    <property type="evidence" value="ECO:0000266"/>
    <property type="project" value="MGI"/>
</dbReference>
<dbReference type="GO" id="GO:0038007">
    <property type="term" value="P:netrin-activated signaling pathway"/>
    <property type="evidence" value="ECO:0000250"/>
    <property type="project" value="UniProtKB"/>
</dbReference>
<dbReference type="GO" id="GO:0048812">
    <property type="term" value="P:neuron projection morphogenesis"/>
    <property type="evidence" value="ECO:0000315"/>
    <property type="project" value="UniProtKB"/>
</dbReference>
<dbReference type="GO" id="GO:0045773">
    <property type="term" value="P:positive regulation of axon extension"/>
    <property type="evidence" value="ECO:0000250"/>
    <property type="project" value="UniProtKB"/>
</dbReference>
<dbReference type="GO" id="GO:2001224">
    <property type="term" value="P:positive regulation of neuron migration"/>
    <property type="evidence" value="ECO:0000315"/>
    <property type="project" value="UniProtKB"/>
</dbReference>
<dbReference type="GO" id="GO:0007265">
    <property type="term" value="P:Ras protein signal transduction"/>
    <property type="evidence" value="ECO:0000250"/>
    <property type="project" value="UniProtKB"/>
</dbReference>
<dbReference type="GO" id="GO:2000114">
    <property type="term" value="P:regulation of establishment of cell polarity"/>
    <property type="evidence" value="ECO:0000315"/>
    <property type="project" value="UniProtKB"/>
</dbReference>
<dbReference type="GO" id="GO:2001222">
    <property type="term" value="P:regulation of neuron migration"/>
    <property type="evidence" value="ECO:0000316"/>
    <property type="project" value="MGI"/>
</dbReference>
<dbReference type="GO" id="GO:0006930">
    <property type="term" value="P:substrate-dependent cell migration, cell extension"/>
    <property type="evidence" value="ECO:0000250"/>
    <property type="project" value="UniProtKB"/>
</dbReference>
<dbReference type="InterPro" id="IPR024849">
    <property type="entry name" value="Shootin-1"/>
</dbReference>
<dbReference type="PANTHER" id="PTHR46606">
    <property type="entry name" value="SHOOTIN-1"/>
    <property type="match status" value="1"/>
</dbReference>
<dbReference type="PANTHER" id="PTHR46606:SF3">
    <property type="entry name" value="SHOOTIN-1"/>
    <property type="match status" value="1"/>
</dbReference>
<gene>
    <name evidence="11" type="primary">Shtn1</name>
    <name type="synonym">Kiaa1598</name>
</gene>
<proteinExistence type="evidence at protein level"/>
<accession>Q8K2Q9</accession>
<accession>Q5DTW5</accession>
<accession>Q8C4F6</accession>
<name>SHOT1_MOUSE</name>
<organism>
    <name type="scientific">Mus musculus</name>
    <name type="common">Mouse</name>
    <dbReference type="NCBI Taxonomy" id="10090"/>
    <lineage>
        <taxon>Eukaryota</taxon>
        <taxon>Metazoa</taxon>
        <taxon>Chordata</taxon>
        <taxon>Craniata</taxon>
        <taxon>Vertebrata</taxon>
        <taxon>Euteleostomi</taxon>
        <taxon>Mammalia</taxon>
        <taxon>Eutheria</taxon>
        <taxon>Euarchontoglires</taxon>
        <taxon>Glires</taxon>
        <taxon>Rodentia</taxon>
        <taxon>Myomorpha</taxon>
        <taxon>Muroidea</taxon>
        <taxon>Muridae</taxon>
        <taxon>Murinae</taxon>
        <taxon>Mus</taxon>
        <taxon>Mus</taxon>
    </lineage>
</organism>
<comment type="function">
    <text evidence="2 7">Involved in the generation of internal asymmetric signals required for neuronal polarization and neurite outgrowth (PubMed:23864681). Mediates netrin-1-induced F-actin-substrate coupling or 'clutch engagement' within the axon growth cone through activation of CDC42, RAC1 and PAK1-dependent signaling pathway, thereby converting the F-actin retrograde flow into traction forces, concomitantly with filopodium extension and axon outgrowth. Plays a role in cytoskeletal organization by regulating the subcellular localization of phosphoinositide 3-kinase (PI3K) activity at the axonal growth cone. Also plays a role in regenerative neurite outgrowth (By similarity). In the developing cortex, cooperates with KIF20B to promote both the transition from the multipolar to the bipolar stage and the radial migration of cortical neurons from the ventricular zone toward the superficial layer of the neocortex (PubMed:23864681). Involved in the accumulation of phosphatidylinositol 3,4,5-trisphosphate (PIP3) in the growth cone of primary hippocampal neurons (PubMed:23864681).</text>
</comment>
<comment type="subunit">
    <text evidence="2 6 7">Interacts with L1CAM; this interaction occurs at axonal growth cones. Interacts with actin filament retrograde flow; this interaction is enhanced in a netrin-1- and PAK1-dependent manner and promotes F-actin-substrate coupling and concomitant formation of traction forces at axonal growth cones. Interacts with RUFY3 (By similarity). Interacts with PFN2 (PubMed:19403918). Interacts (via N-terminus) with KIF20B; this interaction is direct and promotes the association of SHTN1 to microtubules in primary neurons (PubMed:23864681). Associates with microtubule (PubMed:23864681).</text>
</comment>
<comment type="subcellular location">
    <subcellularLocation>
        <location evidence="7">Perikaryon</location>
    </subcellularLocation>
    <subcellularLocation>
        <location evidence="7">Cell projection</location>
        <location evidence="7">Axon</location>
    </subcellularLocation>
    <subcellularLocation>
        <location evidence="5 7">Cell projection</location>
        <location evidence="5 7">Growth cone</location>
    </subcellularLocation>
    <subcellularLocation>
        <location evidence="7">Cytoplasm</location>
        <location evidence="7">Cytoskeleton</location>
    </subcellularLocation>
    <subcellularLocation>
        <location evidence="2">Cell projection</location>
        <location evidence="2">Filopodium</location>
    </subcellularLocation>
    <subcellularLocation>
        <location evidence="2">Cell projection</location>
        <location evidence="2">Lamellipodium</location>
    </subcellularLocation>
    <text evidence="2 7">Localizes in multiple growth cones at neurite tips before the neuronal symmetry-breaking step. Accumulates in growth cones of a single nascent axon in a neurite length-dependent manner during the neuronal symmetry-breaking step; when absent from the nascent axon's siblings, probably due to competitive transport, prevents the formation of surplus axons. Transported anterogradely from the soma to the axon growth cone in an actin and myosin-dependent manner and passively diffuses back to the cell bodies. Colocalized with L1CAM in close apposition with actin filaments in filopodia and lamellipodia of axonal growth cones in hippocampal neurons. Exhibits retrograde movements in filopodia and lamellopodia of axonal growth cones (By similarity). Colocalized with KIF20B along microtubules to the tip of the growing cone in primary hippocampal neurons (PubMed:23864681). Recruited to the growth cone of developing axon in a KIF20B- and microtubule-dependent manner (PubMed:23864681).</text>
</comment>
<comment type="alternative products">
    <event type="alternative splicing"/>
    <isoform>
        <id>Q8K2Q9-1</id>
        <name>1</name>
        <sequence type="displayed"/>
    </isoform>
    <isoform>
        <id>Q8K2Q9-2</id>
        <name>2</name>
        <sequence type="described" ref="VSP_027054 VSP_027055"/>
    </isoform>
</comment>
<comment type="tissue specificity">
    <text evidence="5">Expressed in hippocampal neurons (PubMed:17030985).</text>
</comment>
<comment type="developmental stage">
    <text evidence="7">Expressed in the developing brain. Expressed in the developing cortical plate at 11 and 14 dpc. Expressed in multipolar cells at 14 dpc (at protein level). Expressed in the developing cortical plate of the telencephalon (PubMed:23864681).</text>
</comment>
<comment type="domain">
    <text evidence="2">The N-terminus region is necessary for interaction with actin retrograde filament flow and accumulation in neuronal growth cones.</text>
</comment>
<comment type="PTM">
    <text evidence="2">Phosphorylated on Ser-101 and Ser-249 by PAK1 through a CDC42- and RAC1-dependent signaling pathway, which enhances its association with F-actin retrograde flow in filopodia and lamellipodia of axonal growth cones. Phosphorylation on Ser-101 and Ser-249 is increased by netrin-1.</text>
</comment>
<comment type="similarity">
    <text evidence="10">Belongs to the shootin family.</text>
</comment>
<comment type="sequence caution" evidence="10">
    <conflict type="erroneous initiation">
        <sequence resource="EMBL-CDS" id="BAD90258"/>
    </conflict>
</comment>
<evidence type="ECO:0000250" key="1">
    <source>
        <dbReference type="UniProtKB" id="A0MZ66"/>
    </source>
</evidence>
<evidence type="ECO:0000250" key="2">
    <source>
        <dbReference type="UniProtKB" id="A0MZ67"/>
    </source>
</evidence>
<evidence type="ECO:0000255" key="3"/>
<evidence type="ECO:0000256" key="4">
    <source>
        <dbReference type="SAM" id="MobiDB-lite"/>
    </source>
</evidence>
<evidence type="ECO:0000269" key="5">
    <source>
    </source>
</evidence>
<evidence type="ECO:0000269" key="6">
    <source>
    </source>
</evidence>
<evidence type="ECO:0000269" key="7">
    <source>
    </source>
</evidence>
<evidence type="ECO:0000303" key="8">
    <source>
    </source>
</evidence>
<evidence type="ECO:0000303" key="9">
    <source>
    </source>
</evidence>
<evidence type="ECO:0000305" key="10"/>
<evidence type="ECO:0000312" key="11">
    <source>
        <dbReference type="MGI" id="MGI:1918903"/>
    </source>
</evidence>
<evidence type="ECO:0007744" key="12">
    <source>
    </source>
</evidence>
<evidence type="ECO:0007744" key="13">
    <source>
    </source>
</evidence>
<reference key="1">
    <citation type="journal article" date="2006" name="J. Cell Biol.">
        <title>Shootin1: a protein involved in the organization of an asymmetric signal for neuronal polarization.</title>
        <authorList>
            <person name="Toriyama M."/>
            <person name="Shimada T."/>
            <person name="Kim K.B."/>
            <person name="Mitsuba M."/>
            <person name="Nomura E."/>
            <person name="Katsuta K."/>
            <person name="Sakumura Y."/>
            <person name="Roepstorff P."/>
            <person name="Inagaki N."/>
        </authorList>
    </citation>
    <scope>NUCLEOTIDE SEQUENCE [MRNA] (ISOFORM 2)</scope>
    <scope>SUBCELLULAR LOCATION</scope>
    <scope>TISSUE SPECIFICITY</scope>
    <source>
        <strain>C57BL/6J</strain>
    </source>
</reference>
<reference key="2">
    <citation type="journal article" date="2005" name="Science">
        <title>The transcriptional landscape of the mammalian genome.</title>
        <authorList>
            <person name="Carninci P."/>
            <person name="Kasukawa T."/>
            <person name="Katayama S."/>
            <person name="Gough J."/>
            <person name="Frith M.C."/>
            <person name="Maeda N."/>
            <person name="Oyama R."/>
            <person name="Ravasi T."/>
            <person name="Lenhard B."/>
            <person name="Wells C."/>
            <person name="Kodzius R."/>
            <person name="Shimokawa K."/>
            <person name="Bajic V.B."/>
            <person name="Brenner S.E."/>
            <person name="Batalov S."/>
            <person name="Forrest A.R."/>
            <person name="Zavolan M."/>
            <person name="Davis M.J."/>
            <person name="Wilming L.G."/>
            <person name="Aidinis V."/>
            <person name="Allen J.E."/>
            <person name="Ambesi-Impiombato A."/>
            <person name="Apweiler R."/>
            <person name="Aturaliya R.N."/>
            <person name="Bailey T.L."/>
            <person name="Bansal M."/>
            <person name="Baxter L."/>
            <person name="Beisel K.W."/>
            <person name="Bersano T."/>
            <person name="Bono H."/>
            <person name="Chalk A.M."/>
            <person name="Chiu K.P."/>
            <person name="Choudhary V."/>
            <person name="Christoffels A."/>
            <person name="Clutterbuck D.R."/>
            <person name="Crowe M.L."/>
            <person name="Dalla E."/>
            <person name="Dalrymple B.P."/>
            <person name="de Bono B."/>
            <person name="Della Gatta G."/>
            <person name="di Bernardo D."/>
            <person name="Down T."/>
            <person name="Engstrom P."/>
            <person name="Fagiolini M."/>
            <person name="Faulkner G."/>
            <person name="Fletcher C.F."/>
            <person name="Fukushima T."/>
            <person name="Furuno M."/>
            <person name="Futaki S."/>
            <person name="Gariboldi M."/>
            <person name="Georgii-Hemming P."/>
            <person name="Gingeras T.R."/>
            <person name="Gojobori T."/>
            <person name="Green R.E."/>
            <person name="Gustincich S."/>
            <person name="Harbers M."/>
            <person name="Hayashi Y."/>
            <person name="Hensch T.K."/>
            <person name="Hirokawa N."/>
            <person name="Hill D."/>
            <person name="Huminiecki L."/>
            <person name="Iacono M."/>
            <person name="Ikeo K."/>
            <person name="Iwama A."/>
            <person name="Ishikawa T."/>
            <person name="Jakt M."/>
            <person name="Kanapin A."/>
            <person name="Katoh M."/>
            <person name="Kawasawa Y."/>
            <person name="Kelso J."/>
            <person name="Kitamura H."/>
            <person name="Kitano H."/>
            <person name="Kollias G."/>
            <person name="Krishnan S.P."/>
            <person name="Kruger A."/>
            <person name="Kummerfeld S.K."/>
            <person name="Kurochkin I.V."/>
            <person name="Lareau L.F."/>
            <person name="Lazarevic D."/>
            <person name="Lipovich L."/>
            <person name="Liu J."/>
            <person name="Liuni S."/>
            <person name="McWilliam S."/>
            <person name="Madan Babu M."/>
            <person name="Madera M."/>
            <person name="Marchionni L."/>
            <person name="Matsuda H."/>
            <person name="Matsuzawa S."/>
            <person name="Miki H."/>
            <person name="Mignone F."/>
            <person name="Miyake S."/>
            <person name="Morris K."/>
            <person name="Mottagui-Tabar S."/>
            <person name="Mulder N."/>
            <person name="Nakano N."/>
            <person name="Nakauchi H."/>
            <person name="Ng P."/>
            <person name="Nilsson R."/>
            <person name="Nishiguchi S."/>
            <person name="Nishikawa S."/>
            <person name="Nori F."/>
            <person name="Ohara O."/>
            <person name="Okazaki Y."/>
            <person name="Orlando V."/>
            <person name="Pang K.C."/>
            <person name="Pavan W.J."/>
            <person name="Pavesi G."/>
            <person name="Pesole G."/>
            <person name="Petrovsky N."/>
            <person name="Piazza S."/>
            <person name="Reed J."/>
            <person name="Reid J.F."/>
            <person name="Ring B.Z."/>
            <person name="Ringwald M."/>
            <person name="Rost B."/>
            <person name="Ruan Y."/>
            <person name="Salzberg S.L."/>
            <person name="Sandelin A."/>
            <person name="Schneider C."/>
            <person name="Schoenbach C."/>
            <person name="Sekiguchi K."/>
            <person name="Semple C.A."/>
            <person name="Seno S."/>
            <person name="Sessa L."/>
            <person name="Sheng Y."/>
            <person name="Shibata Y."/>
            <person name="Shimada H."/>
            <person name="Shimada K."/>
            <person name="Silva D."/>
            <person name="Sinclair B."/>
            <person name="Sperling S."/>
            <person name="Stupka E."/>
            <person name="Sugiura K."/>
            <person name="Sultana R."/>
            <person name="Takenaka Y."/>
            <person name="Taki K."/>
            <person name="Tammoja K."/>
            <person name="Tan S.L."/>
            <person name="Tang S."/>
            <person name="Taylor M.S."/>
            <person name="Tegner J."/>
            <person name="Teichmann S.A."/>
            <person name="Ueda H.R."/>
            <person name="van Nimwegen E."/>
            <person name="Verardo R."/>
            <person name="Wei C.L."/>
            <person name="Yagi K."/>
            <person name="Yamanishi H."/>
            <person name="Zabarovsky E."/>
            <person name="Zhu S."/>
            <person name="Zimmer A."/>
            <person name="Hide W."/>
            <person name="Bult C."/>
            <person name="Grimmond S.M."/>
            <person name="Teasdale R.D."/>
            <person name="Liu E.T."/>
            <person name="Brusic V."/>
            <person name="Quackenbush J."/>
            <person name="Wahlestedt C."/>
            <person name="Mattick J.S."/>
            <person name="Hume D.A."/>
            <person name="Kai C."/>
            <person name="Sasaki D."/>
            <person name="Tomaru Y."/>
            <person name="Fukuda S."/>
            <person name="Kanamori-Katayama M."/>
            <person name="Suzuki M."/>
            <person name="Aoki J."/>
            <person name="Arakawa T."/>
            <person name="Iida J."/>
            <person name="Imamura K."/>
            <person name="Itoh M."/>
            <person name="Kato T."/>
            <person name="Kawaji H."/>
            <person name="Kawagashira N."/>
            <person name="Kawashima T."/>
            <person name="Kojima M."/>
            <person name="Kondo S."/>
            <person name="Konno H."/>
            <person name="Nakano K."/>
            <person name="Ninomiya N."/>
            <person name="Nishio T."/>
            <person name="Okada M."/>
            <person name="Plessy C."/>
            <person name="Shibata K."/>
            <person name="Shiraki T."/>
            <person name="Suzuki S."/>
            <person name="Tagami M."/>
            <person name="Waki K."/>
            <person name="Watahiki A."/>
            <person name="Okamura-Oho Y."/>
            <person name="Suzuki H."/>
            <person name="Kawai J."/>
            <person name="Hayashizaki Y."/>
        </authorList>
    </citation>
    <scope>NUCLEOTIDE SEQUENCE [LARGE SCALE MRNA] (ISOFORM 2)</scope>
    <source>
        <strain>C57BL/6J</strain>
        <tissue>Cerebellum</tissue>
    </source>
</reference>
<reference key="3">
    <citation type="submission" date="2005-02" db="EMBL/GenBank/DDBJ databases">
        <title>Prediction of the coding sequences of mouse homologues of KIAA gene. The complete nucleotide sequences of mouse KIAA-homologous cDNAs identified by screening of terminal sequences of cDNA clones randomly sampled from size-fractionated libraries.</title>
        <authorList>
            <person name="Okazaki N."/>
            <person name="Kikuno R.F."/>
            <person name="Ohara R."/>
            <person name="Inamoto S."/>
            <person name="Nagase T."/>
            <person name="Ohara O."/>
            <person name="Koga H."/>
        </authorList>
    </citation>
    <scope>NUCLEOTIDE SEQUENCE [LARGE SCALE MRNA] (ISOFORM 1)</scope>
    <source>
        <tissue>Fetal brain</tissue>
    </source>
</reference>
<reference key="4">
    <citation type="journal article" date="2004" name="Genome Res.">
        <title>The status, quality, and expansion of the NIH full-length cDNA project: the Mammalian Gene Collection (MGC).</title>
        <authorList>
            <consortium name="The MGC Project Team"/>
        </authorList>
    </citation>
    <scope>NUCLEOTIDE SEQUENCE [LARGE SCALE MRNA] (ISOFORM 1)</scope>
    <source>
        <strain>FVB/N</strain>
        <tissue>Mammary tumor</tissue>
    </source>
</reference>
<reference key="5">
    <citation type="journal article" date="2007" name="Proc. Natl. Acad. Sci. U.S.A.">
        <title>Large-scale phosphorylation analysis of mouse liver.</title>
        <authorList>
            <person name="Villen J."/>
            <person name="Beausoleil S.A."/>
            <person name="Gerber S.A."/>
            <person name="Gygi S.P."/>
        </authorList>
    </citation>
    <scope>ACETYLATION [LARGE SCALE ANALYSIS] AT MET-1</scope>
    <scope>PHOSPHORYLATION [LARGE SCALE ANALYSIS] AT SER-3; SER-4; SER-249 AND SER-506</scope>
    <scope>IDENTIFICATION BY MASS SPECTROMETRY [LARGE SCALE ANALYSIS]</scope>
    <source>
        <tissue>Liver</tissue>
    </source>
</reference>
<reference key="6">
    <citation type="journal article" date="2009" name="J. Biomol. Screen.">
        <title>The interaction of proline-rich ligands with profilin probed with an enzyme-linked immunosorbent assay.</title>
        <authorList>
            <person name="Veniere S."/>
            <person name="Ampe C."/>
            <person name="Vandekerckhove J."/>
            <person name="Lambrechts A."/>
        </authorList>
    </citation>
    <scope>INTERACTION WITH PFN2</scope>
</reference>
<reference key="7">
    <citation type="journal article" date="2010" name="Cell">
        <title>A tissue-specific atlas of mouse protein phosphorylation and expression.</title>
        <authorList>
            <person name="Huttlin E.L."/>
            <person name="Jedrychowski M.P."/>
            <person name="Elias J.E."/>
            <person name="Goswami T."/>
            <person name="Rad R."/>
            <person name="Beausoleil S.A."/>
            <person name="Villen J."/>
            <person name="Haas W."/>
            <person name="Sowa M.E."/>
            <person name="Gygi S.P."/>
        </authorList>
    </citation>
    <scope>PHOSPHORYLATION [LARGE SCALE ANALYSIS] AT SER-506</scope>
    <scope>IDENTIFICATION BY MASS SPECTROMETRY [LARGE SCALE ANALYSIS]</scope>
    <source>
        <tissue>Brown adipose tissue</tissue>
        <tissue>Liver</tissue>
        <tissue>Lung</tissue>
        <tissue>Pancreas</tissue>
        <tissue>Spleen</tissue>
        <tissue>Testis</tissue>
    </source>
</reference>
<reference key="8">
    <citation type="journal article" date="2013" name="J. Neurosci.">
        <title>Shootin1 acts in concert with KIF20B to promote polarization of migrating neurons.</title>
        <authorList>
            <person name="Sapir T."/>
            <person name="Levy T."/>
            <person name="Sakakibara A."/>
            <person name="Rabinkov A."/>
            <person name="Miyata T."/>
            <person name="Reiner O."/>
        </authorList>
    </citation>
    <scope>FUNCTION</scope>
    <scope>INTERACTION WITH KIF20B</scope>
    <scope>ASSOCIATION WITH MICROTUBULE</scope>
    <scope>SUBCELLULAR LOCATION</scope>
    <scope>DEVELOPMENTAL STAGE</scope>
</reference>
<feature type="chain" id="PRO_0000295741" description="Shootin-1">
    <location>
        <begin position="1"/>
        <end position="631"/>
    </location>
</feature>
<feature type="region of interest" description="Disordered" evidence="4">
    <location>
        <begin position="343"/>
        <end position="404"/>
    </location>
</feature>
<feature type="region of interest" description="Disordered" evidence="4">
    <location>
        <begin position="417"/>
        <end position="508"/>
    </location>
</feature>
<feature type="region of interest" description="Disordered" evidence="4">
    <location>
        <begin position="530"/>
        <end position="631"/>
    </location>
</feature>
<feature type="coiled-coil region" evidence="3">
    <location>
        <begin position="7"/>
        <end position="353"/>
    </location>
</feature>
<feature type="compositionally biased region" description="Pro residues" evidence="4">
    <location>
        <begin position="352"/>
        <end position="369"/>
    </location>
</feature>
<feature type="compositionally biased region" description="Polar residues" evidence="4">
    <location>
        <begin position="456"/>
        <end position="465"/>
    </location>
</feature>
<feature type="compositionally biased region" description="Polar residues" evidence="4">
    <location>
        <begin position="490"/>
        <end position="505"/>
    </location>
</feature>
<feature type="compositionally biased region" description="Basic and acidic residues" evidence="4">
    <location>
        <begin position="590"/>
        <end position="602"/>
    </location>
</feature>
<feature type="modified residue" description="N-acetylmethionine" evidence="12">
    <location>
        <position position="1"/>
    </location>
</feature>
<feature type="modified residue" description="Phosphoserine" evidence="12">
    <location>
        <position position="3"/>
    </location>
</feature>
<feature type="modified residue" description="Phosphoserine" evidence="12">
    <location>
        <position position="4"/>
    </location>
</feature>
<feature type="modified residue" description="Phosphoserine; by PAK1" evidence="2">
    <location>
        <position position="101"/>
    </location>
</feature>
<feature type="modified residue" description="Phosphoserine" evidence="12">
    <location>
        <position position="249"/>
    </location>
</feature>
<feature type="modified residue" description="Phosphoserine" evidence="1">
    <location>
        <position position="375"/>
    </location>
</feature>
<feature type="modified residue" description="Phosphoserine" evidence="1">
    <location>
        <position position="473"/>
    </location>
</feature>
<feature type="modified residue" description="Phosphothreonine" evidence="1">
    <location>
        <position position="487"/>
    </location>
</feature>
<feature type="modified residue" description="Phosphoserine" evidence="1">
    <location>
        <position position="494"/>
    </location>
</feature>
<feature type="modified residue" description="Phosphothreonine" evidence="1">
    <location>
        <position position="496"/>
    </location>
</feature>
<feature type="modified residue" description="Phosphoserine" evidence="12 13">
    <location>
        <position position="506"/>
    </location>
</feature>
<feature type="modified residue" description="Phosphoserine" evidence="1">
    <location>
        <position position="515"/>
    </location>
</feature>
<feature type="modified residue" description="Phosphothreonine" evidence="1">
    <location>
        <position position="537"/>
    </location>
</feature>
<feature type="splice variant" id="VSP_027054" description="In isoform 2." evidence="8 9">
    <original>GTL</original>
    <variation>ASQ</variation>
    <location>
        <begin position="454"/>
        <end position="456"/>
    </location>
</feature>
<feature type="splice variant" id="VSP_027055" description="In isoform 2." evidence="8 9">
    <location>
        <begin position="457"/>
        <end position="631"/>
    </location>
</feature>
<protein>
    <recommendedName>
        <fullName evidence="11">Shootin-1</fullName>
    </recommendedName>
    <alternativeName>
        <fullName evidence="2">Shootin1</fullName>
    </alternativeName>
</protein>
<sequence>MNSSDEEKQLQLITSLKEQAIGEYEDLRAENQKTKEKCDKIRQERDEAVKKLEEFQKISHMVIEEVNFMQNHLEIEKTCRESAEALATKLNKENKTLKRISMLYMAKLGPDVITEEINIDDDDPATDTDAAAETCVSVQCQKQIKELRDQIVSVQEEKKVLAIELENLKSKLGEVMEEVNKVKQEKAVLNSEVLEQRKVLEKCNRVSMLAVEEYEELQVNLELEKDLRKKAESFAQEMFIEQNKLKRQSHLLLQSSLPDQQLLKALDENAKLIQQLEEERIQHQKKVKELEERLENEALHKEIHNLRQQLELLEDDKRELEQKYQSSEEKARNLKHSVDELQKRVNQSENSVPPPPPPPPPLPPPPPNPIRSLMSMIRKRSHPSGNSAKKEKTTQPETAEEVTDLKRQAVEEMMDRIKKGVHLRPVNQTARPKAKPDSLKGSESAVDELKGILGTLNKSTSSRSLKSLGPENSETELERILRRRKLTAEADSSSPTGILATSESKSMPVLGSVSSVTKSALNKKTLEAEFNNPCPLTPEPGEGPRKLEGCTNPKVTFQPPSKGGYRRKCVGSENQAEPVVVLDPVSTHEPQTKDQAAEKDPTQFEEEGGETQPEYKEDSGGKTGETDSSNC</sequence>